<evidence type="ECO:0000255" key="1">
    <source>
        <dbReference type="HAMAP-Rule" id="MF_01953"/>
    </source>
</evidence>
<evidence type="ECO:0000305" key="2"/>
<sequence length="569" mass="61589">MKKISRKEYASMYGPTTGDKVRLGDTDLIAEVEHDYTIYGEELKFGGGKTLREGMSQSNNPSKEELDLIITNALIVDYTGIYKADIGIKDGKIAGIGKGGNKDMQDGVKNNLSVGPATEALAGEGLIVTAGGIDTHIHFISPQQIPTAFASGVTTMIGGGTGPADGTNATTITPGRRNLKFMLRAAEEYSMNIGFLAKGNASNDASLADQIEAGAIGLKIHEDWGTTPSAINHALDVADKYDVQVAIHTDTLNEAGCVEDTMAAIAGRTMHTYHTEGAGGGHAPDIIKVAGEHNILPASTNPTIPFTVNTEAEHMDMLMVCHHLDKSIKEDVQFADSRIRPQTIAAEDTLHDMGIFSITSSDSQAMGRVGEVITRTWQTADKNKKEFGRLKEEKGDNDNFRIKRYLSKYTINPAIAHGISEYVGSVEVGKVADLVLWSPAFFGVKPNMIIKGGFIALSQMGDANASIPTPQPVYYREMFAHHGKAKYDANITFVSQAAYDKGIKEELGLERQVLPVKNCRNITKKDMQFNDTTAHIEVNSETYHVFVDGKEVTSKPANKVSLAQLFSIF</sequence>
<feature type="chain" id="PRO_1000188876" description="Urease subunit beta">
    <location>
        <begin position="1"/>
        <end position="569"/>
    </location>
</feature>
<feature type="domain" description="Urease" evidence="1">
    <location>
        <begin position="131"/>
        <end position="569"/>
    </location>
</feature>
<feature type="active site" description="Proton donor" evidence="1">
    <location>
        <position position="322"/>
    </location>
</feature>
<feature type="binding site" evidence="1">
    <location>
        <position position="136"/>
    </location>
    <ligand>
        <name>Ni(2+)</name>
        <dbReference type="ChEBI" id="CHEBI:49786"/>
        <label>1</label>
    </ligand>
</feature>
<feature type="binding site" evidence="1">
    <location>
        <position position="138"/>
    </location>
    <ligand>
        <name>Ni(2+)</name>
        <dbReference type="ChEBI" id="CHEBI:49786"/>
        <label>1</label>
    </ligand>
</feature>
<feature type="binding site" description="via carbamate group" evidence="1">
    <location>
        <position position="219"/>
    </location>
    <ligand>
        <name>Ni(2+)</name>
        <dbReference type="ChEBI" id="CHEBI:49786"/>
        <label>1</label>
    </ligand>
</feature>
<feature type="binding site" description="via carbamate group" evidence="1">
    <location>
        <position position="219"/>
    </location>
    <ligand>
        <name>Ni(2+)</name>
        <dbReference type="ChEBI" id="CHEBI:49786"/>
        <label>2</label>
    </ligand>
</feature>
<feature type="binding site" evidence="1">
    <location>
        <position position="221"/>
    </location>
    <ligand>
        <name>substrate</name>
    </ligand>
</feature>
<feature type="binding site" evidence="1">
    <location>
        <position position="248"/>
    </location>
    <ligand>
        <name>Ni(2+)</name>
        <dbReference type="ChEBI" id="CHEBI:49786"/>
        <label>2</label>
    </ligand>
</feature>
<feature type="binding site" evidence="1">
    <location>
        <position position="274"/>
    </location>
    <ligand>
        <name>Ni(2+)</name>
        <dbReference type="ChEBI" id="CHEBI:49786"/>
        <label>2</label>
    </ligand>
</feature>
<feature type="binding site" evidence="1">
    <location>
        <position position="362"/>
    </location>
    <ligand>
        <name>Ni(2+)</name>
        <dbReference type="ChEBI" id="CHEBI:49786"/>
        <label>1</label>
    </ligand>
</feature>
<feature type="modified residue" description="N6-carboxylysine" evidence="1">
    <location>
        <position position="219"/>
    </location>
</feature>
<keyword id="KW-0963">Cytoplasm</keyword>
<keyword id="KW-0378">Hydrolase</keyword>
<keyword id="KW-0479">Metal-binding</keyword>
<keyword id="KW-0533">Nickel</keyword>
<comment type="catalytic activity">
    <reaction evidence="1">
        <text>urea + 2 H2O + H(+) = hydrogencarbonate + 2 NH4(+)</text>
        <dbReference type="Rhea" id="RHEA:20557"/>
        <dbReference type="ChEBI" id="CHEBI:15377"/>
        <dbReference type="ChEBI" id="CHEBI:15378"/>
        <dbReference type="ChEBI" id="CHEBI:16199"/>
        <dbReference type="ChEBI" id="CHEBI:17544"/>
        <dbReference type="ChEBI" id="CHEBI:28938"/>
        <dbReference type="EC" id="3.5.1.5"/>
    </reaction>
</comment>
<comment type="cofactor">
    <cofactor evidence="1">
        <name>Ni cation</name>
        <dbReference type="ChEBI" id="CHEBI:25516"/>
    </cofactor>
    <text evidence="1">Binds 2 nickel ions per subunit.</text>
</comment>
<comment type="pathway">
    <text evidence="1">Nitrogen metabolism; urea degradation; CO(2) and NH(3) from urea (urease route): step 1/1.</text>
</comment>
<comment type="subunit">
    <text evidence="1">Heterohexamer of 3 UreA (alpha) and 3 UreB (beta) subunits.</text>
</comment>
<comment type="subcellular location">
    <subcellularLocation>
        <location evidence="1">Cytoplasm</location>
    </subcellularLocation>
</comment>
<comment type="PTM">
    <text evidence="1">Carboxylation allows a single lysine to coordinate two nickel ions.</text>
</comment>
<comment type="similarity">
    <text evidence="1">Belongs to the metallo-dependent hydrolases superfamily. Urease alpha subunit family.</text>
</comment>
<comment type="caution">
    <text evidence="2">The orthologous protein is known as the alpha subunit (UreC) in most other bacteria.</text>
</comment>
<dbReference type="EC" id="3.5.1.5" evidence="1"/>
<dbReference type="EMBL" id="CP001072">
    <property type="protein sequence ID" value="ACD47535.1"/>
    <property type="molecule type" value="Genomic_DNA"/>
</dbReference>
<dbReference type="RefSeq" id="WP_000724279.1">
    <property type="nucleotide sequence ID" value="NC_010698.2"/>
</dbReference>
<dbReference type="SMR" id="B2UW70"/>
<dbReference type="MEROPS" id="M38.982"/>
<dbReference type="KEGG" id="hps:HPSH_00350"/>
<dbReference type="HOGENOM" id="CLU_000980_0_0_7"/>
<dbReference type="UniPathway" id="UPA00258">
    <property type="reaction ID" value="UER00370"/>
</dbReference>
<dbReference type="GO" id="GO:0005737">
    <property type="term" value="C:cytoplasm"/>
    <property type="evidence" value="ECO:0007669"/>
    <property type="project" value="UniProtKB-SubCell"/>
</dbReference>
<dbReference type="GO" id="GO:0016151">
    <property type="term" value="F:nickel cation binding"/>
    <property type="evidence" value="ECO:0007669"/>
    <property type="project" value="UniProtKB-UniRule"/>
</dbReference>
<dbReference type="GO" id="GO:0009039">
    <property type="term" value="F:urease activity"/>
    <property type="evidence" value="ECO:0007669"/>
    <property type="project" value="UniProtKB-UniRule"/>
</dbReference>
<dbReference type="GO" id="GO:0043419">
    <property type="term" value="P:urea catabolic process"/>
    <property type="evidence" value="ECO:0007669"/>
    <property type="project" value="UniProtKB-UniRule"/>
</dbReference>
<dbReference type="CDD" id="cd00375">
    <property type="entry name" value="Urease_alpha"/>
    <property type="match status" value="1"/>
</dbReference>
<dbReference type="Gene3D" id="3.20.20.140">
    <property type="entry name" value="Metal-dependent hydrolases"/>
    <property type="match status" value="1"/>
</dbReference>
<dbReference type="Gene3D" id="2.30.40.10">
    <property type="entry name" value="Urease, subunit C, domain 1"/>
    <property type="match status" value="1"/>
</dbReference>
<dbReference type="HAMAP" id="MF_01953">
    <property type="entry name" value="Urease_alpha"/>
    <property type="match status" value="1"/>
</dbReference>
<dbReference type="InterPro" id="IPR006680">
    <property type="entry name" value="Amidohydro-rel"/>
</dbReference>
<dbReference type="InterPro" id="IPR011059">
    <property type="entry name" value="Metal-dep_hydrolase_composite"/>
</dbReference>
<dbReference type="InterPro" id="IPR032466">
    <property type="entry name" value="Metal_Hydrolase"/>
</dbReference>
<dbReference type="InterPro" id="IPR011612">
    <property type="entry name" value="Urease_alpha_N_dom"/>
</dbReference>
<dbReference type="InterPro" id="IPR050112">
    <property type="entry name" value="Urease_alpha_subunit"/>
</dbReference>
<dbReference type="InterPro" id="IPR017950">
    <property type="entry name" value="Urease_AS"/>
</dbReference>
<dbReference type="InterPro" id="IPR005848">
    <property type="entry name" value="Urease_asu"/>
</dbReference>
<dbReference type="InterPro" id="IPR017951">
    <property type="entry name" value="Urease_asu_c"/>
</dbReference>
<dbReference type="InterPro" id="IPR029754">
    <property type="entry name" value="Urease_Ni-bd"/>
</dbReference>
<dbReference type="NCBIfam" id="NF009686">
    <property type="entry name" value="PRK13207.1"/>
    <property type="match status" value="1"/>
</dbReference>
<dbReference type="NCBIfam" id="NF010591">
    <property type="entry name" value="PRK13985.1"/>
    <property type="match status" value="1"/>
</dbReference>
<dbReference type="NCBIfam" id="TIGR01792">
    <property type="entry name" value="urease_alph"/>
    <property type="match status" value="1"/>
</dbReference>
<dbReference type="PANTHER" id="PTHR43440">
    <property type="entry name" value="UREASE"/>
    <property type="match status" value="1"/>
</dbReference>
<dbReference type="PANTHER" id="PTHR43440:SF1">
    <property type="entry name" value="UREASE"/>
    <property type="match status" value="1"/>
</dbReference>
<dbReference type="Pfam" id="PF01979">
    <property type="entry name" value="Amidohydro_1"/>
    <property type="match status" value="1"/>
</dbReference>
<dbReference type="Pfam" id="PF00449">
    <property type="entry name" value="Urease_alpha"/>
    <property type="match status" value="1"/>
</dbReference>
<dbReference type="PRINTS" id="PR01752">
    <property type="entry name" value="UREASE"/>
</dbReference>
<dbReference type="SUPFAM" id="SSF51338">
    <property type="entry name" value="Composite domain of metallo-dependent hydrolases"/>
    <property type="match status" value="2"/>
</dbReference>
<dbReference type="SUPFAM" id="SSF51556">
    <property type="entry name" value="Metallo-dependent hydrolases"/>
    <property type="match status" value="1"/>
</dbReference>
<dbReference type="PROSITE" id="PS01120">
    <property type="entry name" value="UREASE_1"/>
    <property type="match status" value="1"/>
</dbReference>
<dbReference type="PROSITE" id="PS00145">
    <property type="entry name" value="UREASE_2"/>
    <property type="match status" value="1"/>
</dbReference>
<dbReference type="PROSITE" id="PS51368">
    <property type="entry name" value="UREASE_3"/>
    <property type="match status" value="1"/>
</dbReference>
<reference key="1">
    <citation type="submission" date="2008-05" db="EMBL/GenBank/DDBJ databases">
        <title>Genome sequence of Helicobacter pylori from the remote Amazon: traces of Asian ancestry of the first Americans.</title>
        <authorList>
            <person name="Kersulyte D."/>
            <person name="Kalia A."/>
            <person name="Gilman R.H."/>
            <person name="Berg D.E."/>
        </authorList>
    </citation>
    <scope>NUCLEOTIDE SEQUENCE [LARGE SCALE GENOMIC DNA]</scope>
    <source>
        <strain>Shi470</strain>
    </source>
</reference>
<accession>B2UW70</accession>
<name>URE1_HELPS</name>
<proteinExistence type="inferred from homology"/>
<protein>
    <recommendedName>
        <fullName evidence="1">Urease subunit beta</fullName>
        <ecNumber evidence="1">3.5.1.5</ecNumber>
    </recommendedName>
    <alternativeName>
        <fullName evidence="1">Urea amidohydrolase subunit beta</fullName>
    </alternativeName>
</protein>
<organism>
    <name type="scientific">Helicobacter pylori (strain Shi470)</name>
    <dbReference type="NCBI Taxonomy" id="512562"/>
    <lineage>
        <taxon>Bacteria</taxon>
        <taxon>Pseudomonadati</taxon>
        <taxon>Campylobacterota</taxon>
        <taxon>Epsilonproteobacteria</taxon>
        <taxon>Campylobacterales</taxon>
        <taxon>Helicobacteraceae</taxon>
        <taxon>Helicobacter</taxon>
    </lineage>
</organism>
<gene>
    <name evidence="1" type="primary">ureB</name>
    <name type="ordered locus">HPSH_00350</name>
</gene>